<reference key="1">
    <citation type="journal article" date="2005" name="Science">
        <title>The transcriptional landscape of the mammalian genome.</title>
        <authorList>
            <person name="Carninci P."/>
            <person name="Kasukawa T."/>
            <person name="Katayama S."/>
            <person name="Gough J."/>
            <person name="Frith M.C."/>
            <person name="Maeda N."/>
            <person name="Oyama R."/>
            <person name="Ravasi T."/>
            <person name="Lenhard B."/>
            <person name="Wells C."/>
            <person name="Kodzius R."/>
            <person name="Shimokawa K."/>
            <person name="Bajic V.B."/>
            <person name="Brenner S.E."/>
            <person name="Batalov S."/>
            <person name="Forrest A.R."/>
            <person name="Zavolan M."/>
            <person name="Davis M.J."/>
            <person name="Wilming L.G."/>
            <person name="Aidinis V."/>
            <person name="Allen J.E."/>
            <person name="Ambesi-Impiombato A."/>
            <person name="Apweiler R."/>
            <person name="Aturaliya R.N."/>
            <person name="Bailey T.L."/>
            <person name="Bansal M."/>
            <person name="Baxter L."/>
            <person name="Beisel K.W."/>
            <person name="Bersano T."/>
            <person name="Bono H."/>
            <person name="Chalk A.M."/>
            <person name="Chiu K.P."/>
            <person name="Choudhary V."/>
            <person name="Christoffels A."/>
            <person name="Clutterbuck D.R."/>
            <person name="Crowe M.L."/>
            <person name="Dalla E."/>
            <person name="Dalrymple B.P."/>
            <person name="de Bono B."/>
            <person name="Della Gatta G."/>
            <person name="di Bernardo D."/>
            <person name="Down T."/>
            <person name="Engstrom P."/>
            <person name="Fagiolini M."/>
            <person name="Faulkner G."/>
            <person name="Fletcher C.F."/>
            <person name="Fukushima T."/>
            <person name="Furuno M."/>
            <person name="Futaki S."/>
            <person name="Gariboldi M."/>
            <person name="Georgii-Hemming P."/>
            <person name="Gingeras T.R."/>
            <person name="Gojobori T."/>
            <person name="Green R.E."/>
            <person name="Gustincich S."/>
            <person name="Harbers M."/>
            <person name="Hayashi Y."/>
            <person name="Hensch T.K."/>
            <person name="Hirokawa N."/>
            <person name="Hill D."/>
            <person name="Huminiecki L."/>
            <person name="Iacono M."/>
            <person name="Ikeo K."/>
            <person name="Iwama A."/>
            <person name="Ishikawa T."/>
            <person name="Jakt M."/>
            <person name="Kanapin A."/>
            <person name="Katoh M."/>
            <person name="Kawasawa Y."/>
            <person name="Kelso J."/>
            <person name="Kitamura H."/>
            <person name="Kitano H."/>
            <person name="Kollias G."/>
            <person name="Krishnan S.P."/>
            <person name="Kruger A."/>
            <person name="Kummerfeld S.K."/>
            <person name="Kurochkin I.V."/>
            <person name="Lareau L.F."/>
            <person name="Lazarevic D."/>
            <person name="Lipovich L."/>
            <person name="Liu J."/>
            <person name="Liuni S."/>
            <person name="McWilliam S."/>
            <person name="Madan Babu M."/>
            <person name="Madera M."/>
            <person name="Marchionni L."/>
            <person name="Matsuda H."/>
            <person name="Matsuzawa S."/>
            <person name="Miki H."/>
            <person name="Mignone F."/>
            <person name="Miyake S."/>
            <person name="Morris K."/>
            <person name="Mottagui-Tabar S."/>
            <person name="Mulder N."/>
            <person name="Nakano N."/>
            <person name="Nakauchi H."/>
            <person name="Ng P."/>
            <person name="Nilsson R."/>
            <person name="Nishiguchi S."/>
            <person name="Nishikawa S."/>
            <person name="Nori F."/>
            <person name="Ohara O."/>
            <person name="Okazaki Y."/>
            <person name="Orlando V."/>
            <person name="Pang K.C."/>
            <person name="Pavan W.J."/>
            <person name="Pavesi G."/>
            <person name="Pesole G."/>
            <person name="Petrovsky N."/>
            <person name="Piazza S."/>
            <person name="Reed J."/>
            <person name="Reid J.F."/>
            <person name="Ring B.Z."/>
            <person name="Ringwald M."/>
            <person name="Rost B."/>
            <person name="Ruan Y."/>
            <person name="Salzberg S.L."/>
            <person name="Sandelin A."/>
            <person name="Schneider C."/>
            <person name="Schoenbach C."/>
            <person name="Sekiguchi K."/>
            <person name="Semple C.A."/>
            <person name="Seno S."/>
            <person name="Sessa L."/>
            <person name="Sheng Y."/>
            <person name="Shibata Y."/>
            <person name="Shimada H."/>
            <person name="Shimada K."/>
            <person name="Silva D."/>
            <person name="Sinclair B."/>
            <person name="Sperling S."/>
            <person name="Stupka E."/>
            <person name="Sugiura K."/>
            <person name="Sultana R."/>
            <person name="Takenaka Y."/>
            <person name="Taki K."/>
            <person name="Tammoja K."/>
            <person name="Tan S.L."/>
            <person name="Tang S."/>
            <person name="Taylor M.S."/>
            <person name="Tegner J."/>
            <person name="Teichmann S.A."/>
            <person name="Ueda H.R."/>
            <person name="van Nimwegen E."/>
            <person name="Verardo R."/>
            <person name="Wei C.L."/>
            <person name="Yagi K."/>
            <person name="Yamanishi H."/>
            <person name="Zabarovsky E."/>
            <person name="Zhu S."/>
            <person name="Zimmer A."/>
            <person name="Hide W."/>
            <person name="Bult C."/>
            <person name="Grimmond S.M."/>
            <person name="Teasdale R.D."/>
            <person name="Liu E.T."/>
            <person name="Brusic V."/>
            <person name="Quackenbush J."/>
            <person name="Wahlestedt C."/>
            <person name="Mattick J.S."/>
            <person name="Hume D.A."/>
            <person name="Kai C."/>
            <person name="Sasaki D."/>
            <person name="Tomaru Y."/>
            <person name="Fukuda S."/>
            <person name="Kanamori-Katayama M."/>
            <person name="Suzuki M."/>
            <person name="Aoki J."/>
            <person name="Arakawa T."/>
            <person name="Iida J."/>
            <person name="Imamura K."/>
            <person name="Itoh M."/>
            <person name="Kato T."/>
            <person name="Kawaji H."/>
            <person name="Kawagashira N."/>
            <person name="Kawashima T."/>
            <person name="Kojima M."/>
            <person name="Kondo S."/>
            <person name="Konno H."/>
            <person name="Nakano K."/>
            <person name="Ninomiya N."/>
            <person name="Nishio T."/>
            <person name="Okada M."/>
            <person name="Plessy C."/>
            <person name="Shibata K."/>
            <person name="Shiraki T."/>
            <person name="Suzuki S."/>
            <person name="Tagami M."/>
            <person name="Waki K."/>
            <person name="Watahiki A."/>
            <person name="Okamura-Oho Y."/>
            <person name="Suzuki H."/>
            <person name="Kawai J."/>
            <person name="Hayashizaki Y."/>
        </authorList>
    </citation>
    <scope>NUCLEOTIDE SEQUENCE [LARGE SCALE MRNA]</scope>
    <source>
        <strain>C57BL/6J</strain>
        <tissue>Pancreas</tissue>
    </source>
</reference>
<reference key="2">
    <citation type="journal article" date="2004" name="Genome Res.">
        <title>The status, quality, and expansion of the NIH full-length cDNA project: the Mammalian Gene Collection (MGC).</title>
        <authorList>
            <consortium name="The MGC Project Team"/>
        </authorList>
    </citation>
    <scope>NUCLEOTIDE SEQUENCE [LARGE SCALE MRNA]</scope>
    <source>
        <strain>129</strain>
        <strain>C57BL/6J</strain>
        <strain>FVB/N</strain>
        <tissue>Mammary tumor</tissue>
    </source>
</reference>
<reference key="3">
    <citation type="journal article" date="2014" name="PLoS ONE">
        <title>TC1(C8orf4) regulates hematopoietic stem/progenitor cells and hematopoiesis.</title>
        <authorList>
            <person name="Jung Y."/>
            <person name="Kim M."/>
            <person name="Soh H."/>
            <person name="Lee S."/>
            <person name="Kim J."/>
            <person name="Park S."/>
            <person name="Song K."/>
            <person name="Lee I."/>
        </authorList>
    </citation>
    <scope>FUNCTION</scope>
    <scope>DISRUPTION PHENOTYPE</scope>
    <scope>SUBCELLULAR LOCATION</scope>
    <scope>TISSUE SPECIFICITY</scope>
</reference>
<reference key="4">
    <citation type="journal article" date="2015" name="Nat. Commun.">
        <title>C8orf4 negatively regulates self-renewal of liver cancer stem cells via suppression of NOTCH2 signalling.</title>
        <authorList>
            <person name="Zhu P."/>
            <person name="Wang Y."/>
            <person name="Du Y."/>
            <person name="He L."/>
            <person name="Huang G."/>
            <person name="Zhang G."/>
            <person name="Yan X."/>
            <person name="Fan Z."/>
        </authorList>
    </citation>
    <scope>TISSUE SPECIFICITY</scope>
</reference>
<gene>
    <name evidence="4" type="primary">Tcim</name>
    <name type="synonym">Tc1</name>
</gene>
<protein>
    <recommendedName>
        <fullName>Transcriptional and immune response regulator</fullName>
    </recommendedName>
</protein>
<accession>Q9D915</accession>
<organism>
    <name type="scientific">Mus musculus</name>
    <name type="common">Mouse</name>
    <dbReference type="NCBI Taxonomy" id="10090"/>
    <lineage>
        <taxon>Eukaryota</taxon>
        <taxon>Metazoa</taxon>
        <taxon>Chordata</taxon>
        <taxon>Craniata</taxon>
        <taxon>Vertebrata</taxon>
        <taxon>Euteleostomi</taxon>
        <taxon>Mammalia</taxon>
        <taxon>Eutheria</taxon>
        <taxon>Euarchontoglires</taxon>
        <taxon>Glires</taxon>
        <taxon>Rodentia</taxon>
        <taxon>Myomorpha</taxon>
        <taxon>Muroidea</taxon>
        <taxon>Muridae</taxon>
        <taxon>Murinae</taxon>
        <taxon>Mus</taxon>
        <taxon>Mus</taxon>
    </lineage>
</organism>
<comment type="function">
    <text evidence="1 2">Seems to be involved in the regulation of cell growth an differentiation, may play different and opposite roles depending on the tissue or cell type. May enhance the WNT-CTNNB1 pathway by relieving antagonistic activity of CBY1. Enhances the proliferation of follicular dendritic cells. Plays a role in the mitogen-activated MAPK2/3 signaling pathway, positively regulates G1-to-S-phase transition of the cell cycle. In endothelial cells, enhances key inflammatory mediators and inflammatory response through the modulation of NF-kappaB transcriptional regulatory activity. Involved in the regulation of heat shock response, seems to play a positive feedback with HSF1 to modulate heat-shock downstream gene expression (By similarity). Plays a role in the regulation of hematopoiesis even if the mechanisms are unknown (PubMed:24937306). In cancers such as thyroid or lung cancer, it has been described as promoter of cell proliferation, G1-to-S-phase transition and inhibitor of apoptosis. However, it negatively regulates self-renewal of liver cancer cells via suppresion of NOTCH2 signaling (By similarity).</text>
</comment>
<comment type="subunit">
    <text evidence="1">Monomer. Interacts with NOTCH2 (via ANK repeats), the interaction inhibits the nuclear translocation of NOTCH2 N2ICD. Interacts (C-terminus) with CBY1 (C-terminus), TCIM competes with CTNNB1 for the interaction with CBY1.</text>
</comment>
<comment type="subcellular location">
    <subcellularLocation>
        <location evidence="2">Cytoplasm</location>
    </subcellularLocation>
    <subcellularLocation>
        <location evidence="2">Nucleus</location>
    </subcellularLocation>
    <subcellularLocation>
        <location evidence="1">Nucleus</location>
        <location evidence="1">Nucleolus</location>
    </subcellularLocation>
    <subcellularLocation>
        <location evidence="1">Nucleus speckle</location>
    </subcellularLocation>
    <text evidence="1">Localizes in nucleus speckles in presence of CBY1. Translocates to the nucleus upon cellular stress such as H(2)O(2).</text>
</comment>
<comment type="tissue specificity">
    <text evidence="2 3">Expressed in liver, expression levels decrease in regenerating liver (PubMed:25985737). In bone marrow, expressed in large progenitor-like cells, cells with ring-shaped nuclei and, at lower, levels in hematopietic stem cell-like cells with round nuclei (at protein level) (PubMed:24937306).</text>
</comment>
<comment type="disruption phenotype">
    <text evidence="2">Mice have increased number of myeloid and lymphoid cells on peripheral blood compared to wild type controls. Red blood cells are small-sized but increased in number. In bone marrow, cells show higher colony forming units.</text>
</comment>
<feature type="chain" id="PRO_0000089606" description="Transcriptional and immune response regulator">
    <location>
        <begin position="1"/>
        <end position="106"/>
    </location>
</feature>
<name>TCIM_MOUSE</name>
<dbReference type="EMBL" id="AK007441">
    <property type="protein sequence ID" value="BAB25041.1"/>
    <property type="molecule type" value="mRNA"/>
</dbReference>
<dbReference type="EMBL" id="BC016562">
    <property type="protein sequence ID" value="AAH16562.1"/>
    <property type="molecule type" value="mRNA"/>
</dbReference>
<dbReference type="CCDS" id="CCDS22194.1"/>
<dbReference type="RefSeq" id="NP_081207.1">
    <property type="nucleotide sequence ID" value="NM_026931.3"/>
</dbReference>
<dbReference type="BioGRID" id="213208">
    <property type="interactions" value="1"/>
</dbReference>
<dbReference type="FunCoup" id="Q9D915">
    <property type="interactions" value="2103"/>
</dbReference>
<dbReference type="STRING" id="10090.ENSMUSP00000058631"/>
<dbReference type="iPTMnet" id="Q9D915"/>
<dbReference type="PhosphoSitePlus" id="Q9D915"/>
<dbReference type="PaxDb" id="10090-ENSMUSP00000058631"/>
<dbReference type="ProteomicsDB" id="254834"/>
<dbReference type="Antibodypedia" id="23908">
    <property type="antibodies" value="67 antibodies from 20 providers"/>
</dbReference>
<dbReference type="DNASU" id="69068"/>
<dbReference type="Ensembl" id="ENSMUST00000052622.6">
    <property type="protein sequence ID" value="ENSMUSP00000058631.5"/>
    <property type="gene ID" value="ENSMUSG00000056313.6"/>
</dbReference>
<dbReference type="GeneID" id="69068"/>
<dbReference type="KEGG" id="mmu:69068"/>
<dbReference type="UCSC" id="uc009lex.1">
    <property type="organism name" value="mouse"/>
</dbReference>
<dbReference type="AGR" id="MGI:1916318"/>
<dbReference type="CTD" id="56892"/>
<dbReference type="MGI" id="MGI:1916318">
    <property type="gene designation" value="Tcim"/>
</dbReference>
<dbReference type="VEuPathDB" id="HostDB:ENSMUSG00000056313"/>
<dbReference type="eggNOG" id="ENOG502S1N0">
    <property type="taxonomic scope" value="Eukaryota"/>
</dbReference>
<dbReference type="GeneTree" id="ENSGT00390000003458"/>
<dbReference type="HOGENOM" id="CLU_172922_0_0_1"/>
<dbReference type="InParanoid" id="Q9D915"/>
<dbReference type="OMA" id="HGCRFDT"/>
<dbReference type="OrthoDB" id="8681175at2759"/>
<dbReference type="PhylomeDB" id="Q9D915"/>
<dbReference type="TreeFam" id="TF338287"/>
<dbReference type="BioGRID-ORCS" id="69068">
    <property type="hits" value="2 hits in 76 CRISPR screens"/>
</dbReference>
<dbReference type="ChiTaRS" id="Tcim">
    <property type="organism name" value="mouse"/>
</dbReference>
<dbReference type="PRO" id="PR:Q9D915"/>
<dbReference type="Proteomes" id="UP000000589">
    <property type="component" value="Chromosome 8"/>
</dbReference>
<dbReference type="RNAct" id="Q9D915">
    <property type="molecule type" value="protein"/>
</dbReference>
<dbReference type="Bgee" id="ENSMUSG00000056313">
    <property type="expression patterns" value="Expressed in parotid gland and 202 other cell types or tissues"/>
</dbReference>
<dbReference type="GO" id="GO:0005737">
    <property type="term" value="C:cytoplasm"/>
    <property type="evidence" value="ECO:0000314"/>
    <property type="project" value="MGI"/>
</dbReference>
<dbReference type="GO" id="GO:0005829">
    <property type="term" value="C:cytosol"/>
    <property type="evidence" value="ECO:0007669"/>
    <property type="project" value="Ensembl"/>
</dbReference>
<dbReference type="GO" id="GO:0016607">
    <property type="term" value="C:nuclear speck"/>
    <property type="evidence" value="ECO:0000250"/>
    <property type="project" value="UniProtKB"/>
</dbReference>
<dbReference type="GO" id="GO:0005730">
    <property type="term" value="C:nucleolus"/>
    <property type="evidence" value="ECO:0000250"/>
    <property type="project" value="UniProtKB"/>
</dbReference>
<dbReference type="GO" id="GO:0005634">
    <property type="term" value="C:nucleus"/>
    <property type="evidence" value="ECO:0000314"/>
    <property type="project" value="MGI"/>
</dbReference>
<dbReference type="GO" id="GO:0005886">
    <property type="term" value="C:plasma membrane"/>
    <property type="evidence" value="ECO:0007669"/>
    <property type="project" value="Ensembl"/>
</dbReference>
<dbReference type="GO" id="GO:0005112">
    <property type="term" value="F:Notch binding"/>
    <property type="evidence" value="ECO:0007669"/>
    <property type="project" value="Ensembl"/>
</dbReference>
<dbReference type="GO" id="GO:0006915">
    <property type="term" value="P:apoptotic process"/>
    <property type="evidence" value="ECO:0007669"/>
    <property type="project" value="UniProtKB-KW"/>
</dbReference>
<dbReference type="GO" id="GO:0034605">
    <property type="term" value="P:cellular response to heat"/>
    <property type="evidence" value="ECO:0000250"/>
    <property type="project" value="UniProtKB"/>
</dbReference>
<dbReference type="GO" id="GO:0002264">
    <property type="term" value="P:endothelial cell activation involved in immune response"/>
    <property type="evidence" value="ECO:0000250"/>
    <property type="project" value="UniProtKB"/>
</dbReference>
<dbReference type="GO" id="GO:0043066">
    <property type="term" value="P:negative regulation of apoptotic process"/>
    <property type="evidence" value="ECO:0007669"/>
    <property type="project" value="Ensembl"/>
</dbReference>
<dbReference type="GO" id="GO:0045746">
    <property type="term" value="P:negative regulation of Notch signaling pathway"/>
    <property type="evidence" value="ECO:0000250"/>
    <property type="project" value="UniProtKB"/>
</dbReference>
<dbReference type="GO" id="GO:1901224">
    <property type="term" value="P:positive regulation of non-canonical NF-kappaB signal transduction"/>
    <property type="evidence" value="ECO:0000250"/>
    <property type="project" value="UniProtKB"/>
</dbReference>
<dbReference type="GO" id="GO:0010739">
    <property type="term" value="P:positive regulation of protein kinase A signaling"/>
    <property type="evidence" value="ECO:0007669"/>
    <property type="project" value="Ensembl"/>
</dbReference>
<dbReference type="GO" id="GO:1902806">
    <property type="term" value="P:regulation of cell cycle G1/S phase transition"/>
    <property type="evidence" value="ECO:0000250"/>
    <property type="project" value="UniProtKB"/>
</dbReference>
<dbReference type="GO" id="GO:1903706">
    <property type="term" value="P:regulation of hemopoiesis"/>
    <property type="evidence" value="ECO:0000314"/>
    <property type="project" value="MGI"/>
</dbReference>
<dbReference type="InterPro" id="IPR020282">
    <property type="entry name" value="Avpi1/C8orf4_dom"/>
</dbReference>
<dbReference type="InterPro" id="IPR039580">
    <property type="entry name" value="Tcim"/>
</dbReference>
<dbReference type="PANTHER" id="PTHR32358">
    <property type="entry name" value="TRANSCRIPTIONAL AND IMMUNE RESPONSE REGULATOR"/>
    <property type="match status" value="1"/>
</dbReference>
<dbReference type="PANTHER" id="PTHR32358:SF1">
    <property type="entry name" value="TRANSCRIPTIONAL AND IMMUNE RESPONSE REGULATOR"/>
    <property type="match status" value="1"/>
</dbReference>
<dbReference type="Pfam" id="PF15063">
    <property type="entry name" value="TC1"/>
    <property type="match status" value="1"/>
</dbReference>
<evidence type="ECO:0000250" key="1">
    <source>
        <dbReference type="UniProtKB" id="Q9NR00"/>
    </source>
</evidence>
<evidence type="ECO:0000269" key="2">
    <source>
    </source>
</evidence>
<evidence type="ECO:0000269" key="3">
    <source>
    </source>
</evidence>
<evidence type="ECO:0000312" key="4">
    <source>
        <dbReference type="MGI" id="MGI:1916318"/>
    </source>
</evidence>
<keyword id="KW-0053">Apoptosis</keyword>
<keyword id="KW-0963">Cytoplasm</keyword>
<keyword id="KW-0539">Nucleus</keyword>
<keyword id="KW-1185">Reference proteome</keyword>
<proteinExistence type="evidence at protein level"/>
<sequence>MKAKPSHQATSMSSSLRVSPSIHGYHFDTAARKKAVGNIFENIDQESLQRLFRNSGDKKAEERAKIIFAIDQDLEEKTRALMALKKRTKDKLLQFLKLRKYSIKVH</sequence>